<feature type="chain" id="PRO_0000163305" description="Ribosome maturation factor RimM">
    <location>
        <begin position="1"/>
        <end position="174"/>
    </location>
</feature>
<feature type="domain" description="PRC barrel" evidence="1">
    <location>
        <begin position="98"/>
        <end position="172"/>
    </location>
</feature>
<comment type="function">
    <text evidence="1">An accessory protein needed during the final step in the assembly of 30S ribosomal subunit, possibly for assembly of the head region. Essential for efficient processing of 16S rRNA. May be needed both before and after RbfA during the maturation of 16S rRNA. It has affinity for free ribosomal 30S subunits but not for 70S ribosomes.</text>
</comment>
<comment type="subunit">
    <text evidence="1">Binds ribosomal protein uS19.</text>
</comment>
<comment type="subcellular location">
    <subcellularLocation>
        <location evidence="1">Cytoplasm</location>
    </subcellularLocation>
</comment>
<comment type="domain">
    <text evidence="1">The PRC barrel domain binds ribosomal protein uS19.</text>
</comment>
<comment type="similarity">
    <text evidence="1">Belongs to the RimM family.</text>
</comment>
<evidence type="ECO:0000255" key="1">
    <source>
        <dbReference type="HAMAP-Rule" id="MF_00014"/>
    </source>
</evidence>
<dbReference type="EMBL" id="AL935263">
    <property type="protein sequence ID" value="CCC78949.1"/>
    <property type="molecule type" value="Genomic_DNA"/>
</dbReference>
<dbReference type="RefSeq" id="WP_003640383.1">
    <property type="nucleotide sequence ID" value="NC_004567.2"/>
</dbReference>
<dbReference type="RefSeq" id="YP_004889463.1">
    <property type="nucleotide sequence ID" value="NC_004567.2"/>
</dbReference>
<dbReference type="SMR" id="Q88WJ3"/>
<dbReference type="STRING" id="220668.lp_1638"/>
<dbReference type="EnsemblBacteria" id="CCC78949">
    <property type="protein sequence ID" value="CCC78949"/>
    <property type="gene ID" value="lp_1638"/>
</dbReference>
<dbReference type="GeneID" id="89669018"/>
<dbReference type="KEGG" id="lpl:lp_1638"/>
<dbReference type="PATRIC" id="fig|220668.9.peg.1385"/>
<dbReference type="eggNOG" id="COG0806">
    <property type="taxonomic scope" value="Bacteria"/>
</dbReference>
<dbReference type="HOGENOM" id="CLU_077636_3_1_9"/>
<dbReference type="OrthoDB" id="9810331at2"/>
<dbReference type="PhylomeDB" id="Q88WJ3"/>
<dbReference type="Proteomes" id="UP000000432">
    <property type="component" value="Chromosome"/>
</dbReference>
<dbReference type="GO" id="GO:0005737">
    <property type="term" value="C:cytoplasm"/>
    <property type="evidence" value="ECO:0007669"/>
    <property type="project" value="UniProtKB-SubCell"/>
</dbReference>
<dbReference type="GO" id="GO:0005840">
    <property type="term" value="C:ribosome"/>
    <property type="evidence" value="ECO:0007669"/>
    <property type="project" value="InterPro"/>
</dbReference>
<dbReference type="GO" id="GO:0043022">
    <property type="term" value="F:ribosome binding"/>
    <property type="evidence" value="ECO:0007669"/>
    <property type="project" value="InterPro"/>
</dbReference>
<dbReference type="GO" id="GO:0042274">
    <property type="term" value="P:ribosomal small subunit biogenesis"/>
    <property type="evidence" value="ECO:0007669"/>
    <property type="project" value="UniProtKB-UniRule"/>
</dbReference>
<dbReference type="GO" id="GO:0006364">
    <property type="term" value="P:rRNA processing"/>
    <property type="evidence" value="ECO:0007669"/>
    <property type="project" value="UniProtKB-UniRule"/>
</dbReference>
<dbReference type="Gene3D" id="2.30.30.240">
    <property type="entry name" value="PRC-barrel domain"/>
    <property type="match status" value="1"/>
</dbReference>
<dbReference type="Gene3D" id="2.40.30.60">
    <property type="entry name" value="RimM"/>
    <property type="match status" value="1"/>
</dbReference>
<dbReference type="HAMAP" id="MF_00014">
    <property type="entry name" value="Ribosome_mat_RimM"/>
    <property type="match status" value="1"/>
</dbReference>
<dbReference type="InterPro" id="IPR027275">
    <property type="entry name" value="PRC-brl_dom"/>
</dbReference>
<dbReference type="InterPro" id="IPR011033">
    <property type="entry name" value="PRC_barrel-like_sf"/>
</dbReference>
<dbReference type="InterPro" id="IPR011961">
    <property type="entry name" value="RimM"/>
</dbReference>
<dbReference type="InterPro" id="IPR002676">
    <property type="entry name" value="RimM_N"/>
</dbReference>
<dbReference type="InterPro" id="IPR036976">
    <property type="entry name" value="RimM_N_sf"/>
</dbReference>
<dbReference type="InterPro" id="IPR009000">
    <property type="entry name" value="Transl_B-barrel_sf"/>
</dbReference>
<dbReference type="NCBIfam" id="TIGR02273">
    <property type="entry name" value="16S_RimM"/>
    <property type="match status" value="1"/>
</dbReference>
<dbReference type="PANTHER" id="PTHR33692">
    <property type="entry name" value="RIBOSOME MATURATION FACTOR RIMM"/>
    <property type="match status" value="1"/>
</dbReference>
<dbReference type="PANTHER" id="PTHR33692:SF1">
    <property type="entry name" value="RIBOSOME MATURATION FACTOR RIMM"/>
    <property type="match status" value="1"/>
</dbReference>
<dbReference type="Pfam" id="PF05239">
    <property type="entry name" value="PRC"/>
    <property type="match status" value="1"/>
</dbReference>
<dbReference type="Pfam" id="PF01782">
    <property type="entry name" value="RimM"/>
    <property type="match status" value="1"/>
</dbReference>
<dbReference type="SUPFAM" id="SSF50346">
    <property type="entry name" value="PRC-barrel domain"/>
    <property type="match status" value="1"/>
</dbReference>
<dbReference type="SUPFAM" id="SSF50447">
    <property type="entry name" value="Translation proteins"/>
    <property type="match status" value="1"/>
</dbReference>
<keyword id="KW-0143">Chaperone</keyword>
<keyword id="KW-0963">Cytoplasm</keyword>
<keyword id="KW-1185">Reference proteome</keyword>
<keyword id="KW-0690">Ribosome biogenesis</keyword>
<keyword id="KW-0698">rRNA processing</keyword>
<protein>
    <recommendedName>
        <fullName evidence="1">Ribosome maturation factor RimM</fullName>
    </recommendedName>
</protein>
<sequence length="174" mass="19323">MDYYRVGTLVNTHGIRGEVKVVVVTDFPEERFKVGQQLSLFKTPDETTGGITVKIAKAREQKGLYFLTFEGLDNINDVERYKGWTIKVPAEALHALPAGEYYYHQIVGLQVVTTADEPLGTIKEILSPGANDVWVVKRDHGQSDVLLPKIPQVIKDVDLDAGVVTVELMEGLID</sequence>
<gene>
    <name evidence="1" type="primary">rimM</name>
    <name type="ordered locus">lp_1638</name>
</gene>
<name>RIMM_LACPL</name>
<proteinExistence type="inferred from homology"/>
<organism>
    <name type="scientific">Lactiplantibacillus plantarum (strain ATCC BAA-793 / NCIMB 8826 / WCFS1)</name>
    <name type="common">Lactobacillus plantarum</name>
    <dbReference type="NCBI Taxonomy" id="220668"/>
    <lineage>
        <taxon>Bacteria</taxon>
        <taxon>Bacillati</taxon>
        <taxon>Bacillota</taxon>
        <taxon>Bacilli</taxon>
        <taxon>Lactobacillales</taxon>
        <taxon>Lactobacillaceae</taxon>
        <taxon>Lactiplantibacillus</taxon>
    </lineage>
</organism>
<reference key="1">
    <citation type="journal article" date="2003" name="Proc. Natl. Acad. Sci. U.S.A.">
        <title>Complete genome sequence of Lactobacillus plantarum WCFS1.</title>
        <authorList>
            <person name="Kleerebezem M."/>
            <person name="Boekhorst J."/>
            <person name="van Kranenburg R."/>
            <person name="Molenaar D."/>
            <person name="Kuipers O.P."/>
            <person name="Leer R."/>
            <person name="Tarchini R."/>
            <person name="Peters S.A."/>
            <person name="Sandbrink H.M."/>
            <person name="Fiers M.W.E.J."/>
            <person name="Stiekema W."/>
            <person name="Klein Lankhorst R.M."/>
            <person name="Bron P.A."/>
            <person name="Hoffer S.M."/>
            <person name="Nierop Groot M.N."/>
            <person name="Kerkhoven R."/>
            <person name="De Vries M."/>
            <person name="Ursing B."/>
            <person name="De Vos W.M."/>
            <person name="Siezen R.J."/>
        </authorList>
    </citation>
    <scope>NUCLEOTIDE SEQUENCE [LARGE SCALE GENOMIC DNA]</scope>
    <source>
        <strain>ATCC BAA-793 / NCIMB 8826 / WCFS1</strain>
    </source>
</reference>
<reference key="2">
    <citation type="journal article" date="2012" name="J. Bacteriol.">
        <title>Complete resequencing and reannotation of the Lactobacillus plantarum WCFS1 genome.</title>
        <authorList>
            <person name="Siezen R.J."/>
            <person name="Francke C."/>
            <person name="Renckens B."/>
            <person name="Boekhorst J."/>
            <person name="Wels M."/>
            <person name="Kleerebezem M."/>
            <person name="van Hijum S.A."/>
        </authorList>
    </citation>
    <scope>NUCLEOTIDE SEQUENCE [LARGE SCALE GENOMIC DNA]</scope>
    <scope>GENOME REANNOTATION</scope>
    <source>
        <strain>ATCC BAA-793 / NCIMB 8826 / WCFS1</strain>
    </source>
</reference>
<accession>Q88WJ3</accession>
<accession>F9UP10</accession>